<proteinExistence type="inferred from homology"/>
<reference key="1">
    <citation type="submission" date="2008-05" db="EMBL/GenBank/DDBJ databases">
        <title>Complete sequence of Shigella boydii serotype 18 strain BS512.</title>
        <authorList>
            <person name="Rasko D.A."/>
            <person name="Rosovitz M."/>
            <person name="Maurelli A.T."/>
            <person name="Myers G."/>
            <person name="Seshadri R."/>
            <person name="Cer R."/>
            <person name="Jiang L."/>
            <person name="Ravel J."/>
            <person name="Sebastian Y."/>
        </authorList>
    </citation>
    <scope>NUCLEOTIDE SEQUENCE [LARGE SCALE GENOMIC DNA]</scope>
    <source>
        <strain>CDC 3083-94 / BS512</strain>
    </source>
</reference>
<evidence type="ECO:0000255" key="1">
    <source>
        <dbReference type="HAMAP-Rule" id="MF_00388"/>
    </source>
</evidence>
<accession>B2U2A1</accession>
<comment type="function">
    <text evidence="1">Catalyzes the hydrolysis of UDP-3-O-myristoyl-N-acetylglucosamine to form UDP-3-O-myristoylglucosamine and acetate, the committed step in lipid A biosynthesis.</text>
</comment>
<comment type="catalytic activity">
    <reaction evidence="1">
        <text>a UDP-3-O-[(3R)-3-hydroxyacyl]-N-acetyl-alpha-D-glucosamine + H2O = a UDP-3-O-[(3R)-3-hydroxyacyl]-alpha-D-glucosamine + acetate</text>
        <dbReference type="Rhea" id="RHEA:67816"/>
        <dbReference type="ChEBI" id="CHEBI:15377"/>
        <dbReference type="ChEBI" id="CHEBI:30089"/>
        <dbReference type="ChEBI" id="CHEBI:137740"/>
        <dbReference type="ChEBI" id="CHEBI:173225"/>
        <dbReference type="EC" id="3.5.1.108"/>
    </reaction>
</comment>
<comment type="cofactor">
    <cofactor evidence="1">
        <name>Zn(2+)</name>
        <dbReference type="ChEBI" id="CHEBI:29105"/>
    </cofactor>
</comment>
<comment type="pathway">
    <text evidence="1">Glycolipid biosynthesis; lipid IV(A) biosynthesis; lipid IV(A) from (3R)-3-hydroxytetradecanoyl-[acyl-carrier-protein] and UDP-N-acetyl-alpha-D-glucosamine: step 2/6.</text>
</comment>
<comment type="similarity">
    <text evidence="1">Belongs to the LpxC family.</text>
</comment>
<dbReference type="EC" id="3.5.1.108" evidence="1"/>
<dbReference type="EMBL" id="CP001063">
    <property type="protein sequence ID" value="ACD09927.1"/>
    <property type="molecule type" value="Genomic_DNA"/>
</dbReference>
<dbReference type="RefSeq" id="WP_000595479.1">
    <property type="nucleotide sequence ID" value="NC_010658.1"/>
</dbReference>
<dbReference type="SMR" id="B2U2A1"/>
<dbReference type="STRING" id="344609.SbBS512_E0090"/>
<dbReference type="KEGG" id="sbc:SbBS512_E0090"/>
<dbReference type="HOGENOM" id="CLU_046528_1_0_6"/>
<dbReference type="UniPathway" id="UPA00359">
    <property type="reaction ID" value="UER00478"/>
</dbReference>
<dbReference type="Proteomes" id="UP000001030">
    <property type="component" value="Chromosome"/>
</dbReference>
<dbReference type="GO" id="GO:0016020">
    <property type="term" value="C:membrane"/>
    <property type="evidence" value="ECO:0007669"/>
    <property type="project" value="GOC"/>
</dbReference>
<dbReference type="GO" id="GO:0046872">
    <property type="term" value="F:metal ion binding"/>
    <property type="evidence" value="ECO:0007669"/>
    <property type="project" value="UniProtKB-KW"/>
</dbReference>
<dbReference type="GO" id="GO:0103117">
    <property type="term" value="F:UDP-3-O-acyl-N-acetylglucosamine deacetylase activity"/>
    <property type="evidence" value="ECO:0007669"/>
    <property type="project" value="UniProtKB-UniRule"/>
</dbReference>
<dbReference type="GO" id="GO:0009245">
    <property type="term" value="P:lipid A biosynthetic process"/>
    <property type="evidence" value="ECO:0007669"/>
    <property type="project" value="UniProtKB-UniRule"/>
</dbReference>
<dbReference type="FunFam" id="3.30.1700.10:FF:000001">
    <property type="entry name" value="UDP-3-O-acyl-N-acetylglucosamine deacetylase"/>
    <property type="match status" value="1"/>
</dbReference>
<dbReference type="FunFam" id="3.30.230.20:FF:000001">
    <property type="entry name" value="UDP-3-O-acyl-N-acetylglucosamine deacetylase"/>
    <property type="match status" value="1"/>
</dbReference>
<dbReference type="Gene3D" id="3.30.230.20">
    <property type="entry name" value="lpxc deacetylase, domain 1"/>
    <property type="match status" value="1"/>
</dbReference>
<dbReference type="Gene3D" id="3.30.1700.10">
    <property type="entry name" value="lpxc deacetylase, domain 2"/>
    <property type="match status" value="1"/>
</dbReference>
<dbReference type="HAMAP" id="MF_00388">
    <property type="entry name" value="LpxC"/>
    <property type="match status" value="1"/>
</dbReference>
<dbReference type="InterPro" id="IPR020568">
    <property type="entry name" value="Ribosomal_Su5_D2-typ_SF"/>
</dbReference>
<dbReference type="InterPro" id="IPR004463">
    <property type="entry name" value="UDP-acyl_GlcNac_deAcase"/>
</dbReference>
<dbReference type="InterPro" id="IPR011334">
    <property type="entry name" value="UDP-acyl_GlcNac_deAcase_C"/>
</dbReference>
<dbReference type="InterPro" id="IPR015870">
    <property type="entry name" value="UDP-acyl_N-AcGlcN_deAcase_N"/>
</dbReference>
<dbReference type="NCBIfam" id="TIGR00325">
    <property type="entry name" value="lpxC"/>
    <property type="match status" value="1"/>
</dbReference>
<dbReference type="PANTHER" id="PTHR33694">
    <property type="entry name" value="UDP-3-O-ACYL-N-ACETYLGLUCOSAMINE DEACETYLASE 1, MITOCHONDRIAL-RELATED"/>
    <property type="match status" value="1"/>
</dbReference>
<dbReference type="PANTHER" id="PTHR33694:SF1">
    <property type="entry name" value="UDP-3-O-ACYL-N-ACETYLGLUCOSAMINE DEACETYLASE 1, MITOCHONDRIAL-RELATED"/>
    <property type="match status" value="1"/>
</dbReference>
<dbReference type="Pfam" id="PF03331">
    <property type="entry name" value="LpxC"/>
    <property type="match status" value="1"/>
</dbReference>
<dbReference type="SUPFAM" id="SSF54211">
    <property type="entry name" value="Ribosomal protein S5 domain 2-like"/>
    <property type="match status" value="2"/>
</dbReference>
<gene>
    <name evidence="1" type="primary">lpxC</name>
    <name type="ordered locus">SbBS512_E0090</name>
</gene>
<sequence>MIKQRTLKRIVQATGVGLHTGKKVTLTLRPAPANTGVIYRRTDLNPPVDFPADAKSVRDTMLCTCLVNEHDVRISTVEHLNAALAGLGIDNIVIEVNAPEIPIMDGSAAPFVYLLLDAGIDELNCAKKFVRIKETVRVEDGDKWAEFKPYNGFSLDFTIDFNHPAIDSSNQRYAMNFSADAFMRQISRARTFGFMRDIEYLQSRGLCLGGSFDCAIVVDDYRVLNEDGLRFEDEFVRHKMLDAIGDLFMCGHNIIGAFIAYKSGHALNNKLLQAVLAKQEAWEYVTFQDDAELPLAFKAPSAVLA</sequence>
<protein>
    <recommendedName>
        <fullName evidence="1">UDP-3-O-acyl-N-acetylglucosamine deacetylase</fullName>
        <shortName evidence="1">UDP-3-O-acyl-GlcNAc deacetylase</shortName>
        <ecNumber evidence="1">3.5.1.108</ecNumber>
    </recommendedName>
    <alternativeName>
        <fullName evidence="1">UDP-3-O-[R-3-hydroxymyristoyl]-N-acetylglucosamine deacetylase</fullName>
    </alternativeName>
</protein>
<keyword id="KW-0378">Hydrolase</keyword>
<keyword id="KW-0441">Lipid A biosynthesis</keyword>
<keyword id="KW-0444">Lipid biosynthesis</keyword>
<keyword id="KW-0443">Lipid metabolism</keyword>
<keyword id="KW-0479">Metal-binding</keyword>
<keyword id="KW-1185">Reference proteome</keyword>
<keyword id="KW-0862">Zinc</keyword>
<name>LPXC_SHIB3</name>
<feature type="chain" id="PRO_1000122823" description="UDP-3-O-acyl-N-acetylglucosamine deacetylase">
    <location>
        <begin position="1"/>
        <end position="305"/>
    </location>
</feature>
<feature type="active site" description="Proton donor" evidence="1">
    <location>
        <position position="265"/>
    </location>
</feature>
<feature type="binding site" evidence="1">
    <location>
        <position position="79"/>
    </location>
    <ligand>
        <name>Zn(2+)</name>
        <dbReference type="ChEBI" id="CHEBI:29105"/>
    </ligand>
</feature>
<feature type="binding site" evidence="1">
    <location>
        <position position="238"/>
    </location>
    <ligand>
        <name>Zn(2+)</name>
        <dbReference type="ChEBI" id="CHEBI:29105"/>
    </ligand>
</feature>
<feature type="binding site" evidence="1">
    <location>
        <position position="242"/>
    </location>
    <ligand>
        <name>Zn(2+)</name>
        <dbReference type="ChEBI" id="CHEBI:29105"/>
    </ligand>
</feature>
<organism>
    <name type="scientific">Shigella boydii serotype 18 (strain CDC 3083-94 / BS512)</name>
    <dbReference type="NCBI Taxonomy" id="344609"/>
    <lineage>
        <taxon>Bacteria</taxon>
        <taxon>Pseudomonadati</taxon>
        <taxon>Pseudomonadota</taxon>
        <taxon>Gammaproteobacteria</taxon>
        <taxon>Enterobacterales</taxon>
        <taxon>Enterobacteriaceae</taxon>
        <taxon>Shigella</taxon>
    </lineage>
</organism>